<evidence type="ECO:0000255" key="1">
    <source>
        <dbReference type="HAMAP-Rule" id="MF_01805"/>
    </source>
</evidence>
<organism>
    <name type="scientific">Streptococcus pyogenes serotype M4 (strain MGAS10750)</name>
    <dbReference type="NCBI Taxonomy" id="370554"/>
    <lineage>
        <taxon>Bacteria</taxon>
        <taxon>Bacillati</taxon>
        <taxon>Bacillota</taxon>
        <taxon>Bacilli</taxon>
        <taxon>Lactobacillales</taxon>
        <taxon>Streptococcaceae</taxon>
        <taxon>Streptococcus</taxon>
    </lineage>
</organism>
<protein>
    <recommendedName>
        <fullName evidence="1">Segregation and condensation protein A</fullName>
    </recommendedName>
</protein>
<name>SCPA_STRPF</name>
<gene>
    <name evidence="1" type="primary">scpA</name>
    <name type="ordered locus">MGAS10750_Spy0302</name>
</gene>
<dbReference type="EMBL" id="CP000262">
    <property type="protein sequence ID" value="ABF37252.1"/>
    <property type="molecule type" value="Genomic_DNA"/>
</dbReference>
<dbReference type="SMR" id="Q1J8A9"/>
<dbReference type="KEGG" id="spi:MGAS10750_Spy0302"/>
<dbReference type="HOGENOM" id="CLU_038686_3_3_9"/>
<dbReference type="Proteomes" id="UP000002434">
    <property type="component" value="Chromosome"/>
</dbReference>
<dbReference type="GO" id="GO:0005737">
    <property type="term" value="C:cytoplasm"/>
    <property type="evidence" value="ECO:0007669"/>
    <property type="project" value="UniProtKB-SubCell"/>
</dbReference>
<dbReference type="GO" id="GO:0051301">
    <property type="term" value="P:cell division"/>
    <property type="evidence" value="ECO:0007669"/>
    <property type="project" value="UniProtKB-KW"/>
</dbReference>
<dbReference type="GO" id="GO:0007059">
    <property type="term" value="P:chromosome segregation"/>
    <property type="evidence" value="ECO:0007669"/>
    <property type="project" value="UniProtKB-UniRule"/>
</dbReference>
<dbReference type="GO" id="GO:0006260">
    <property type="term" value="P:DNA replication"/>
    <property type="evidence" value="ECO:0007669"/>
    <property type="project" value="UniProtKB-UniRule"/>
</dbReference>
<dbReference type="Gene3D" id="6.10.250.2410">
    <property type="match status" value="1"/>
</dbReference>
<dbReference type="HAMAP" id="MF_01805">
    <property type="entry name" value="ScpA"/>
    <property type="match status" value="1"/>
</dbReference>
<dbReference type="InterPro" id="IPR003768">
    <property type="entry name" value="ScpA"/>
</dbReference>
<dbReference type="NCBIfam" id="NF000993">
    <property type="entry name" value="PRK00104.1-2"/>
    <property type="match status" value="1"/>
</dbReference>
<dbReference type="PANTHER" id="PTHR33969">
    <property type="entry name" value="SEGREGATION AND CONDENSATION PROTEIN A"/>
    <property type="match status" value="1"/>
</dbReference>
<dbReference type="PANTHER" id="PTHR33969:SF2">
    <property type="entry name" value="SEGREGATION AND CONDENSATION PROTEIN A"/>
    <property type="match status" value="1"/>
</dbReference>
<dbReference type="Pfam" id="PF02616">
    <property type="entry name" value="SMC_ScpA"/>
    <property type="match status" value="1"/>
</dbReference>
<feature type="chain" id="PRO_1000069983" description="Segregation and condensation protein A">
    <location>
        <begin position="1"/>
        <end position="234"/>
    </location>
</feature>
<comment type="function">
    <text evidence="1">Participates in chromosomal partition during cell division. May act via the formation of a condensin-like complex containing Smc and ScpB that pull DNA away from mid-cell into both cell halves.</text>
</comment>
<comment type="subunit">
    <text evidence="1">Component of a cohesin-like complex composed of ScpA, ScpB and the Smc homodimer, in which ScpA and ScpB bind to the head domain of Smc. The presence of the three proteins is required for the association of the complex with DNA.</text>
</comment>
<comment type="subcellular location">
    <subcellularLocation>
        <location evidence="1">Cytoplasm</location>
    </subcellularLocation>
    <text evidence="1">Associated with two foci at the outer edges of the nucleoid region in young cells, and at four foci within both cell halves in older cells.</text>
</comment>
<comment type="similarity">
    <text evidence="1">Belongs to the ScpA family.</text>
</comment>
<proteinExistence type="inferred from homology"/>
<accession>Q1J8A9</accession>
<keyword id="KW-0131">Cell cycle</keyword>
<keyword id="KW-0132">Cell division</keyword>
<keyword id="KW-0159">Chromosome partition</keyword>
<keyword id="KW-0963">Cytoplasm</keyword>
<sequence>MDIKLKDFEGPLDLLLHLVSQYKVDIYEVPIVEVIEQYLNYIETLQVMKLEVAGDYMLMASQLMLIKSRRLLPKVVEHIEEEDLEQDLLEKIEEYSRFKAVSQALAKQHDQRAKWYSKPKQELIFEDAILQEDKTVMDLFLAFSNIMAAKRAVLKNNHTVIERDDYKIEDMMASIKQRLEKENVISLSAIFEECQTLNEVISIFLASLELIKLHVVFVEQLSNFGAIILRKEKK</sequence>
<reference key="1">
    <citation type="journal article" date="2006" name="Proc. Natl. Acad. Sci. U.S.A.">
        <title>Molecular genetic anatomy of inter- and intraserotype variation in the human bacterial pathogen group A Streptococcus.</title>
        <authorList>
            <person name="Beres S.B."/>
            <person name="Richter E.W."/>
            <person name="Nagiec M.J."/>
            <person name="Sumby P."/>
            <person name="Porcella S.F."/>
            <person name="DeLeo F.R."/>
            <person name="Musser J.M."/>
        </authorList>
    </citation>
    <scope>NUCLEOTIDE SEQUENCE [LARGE SCALE GENOMIC DNA]</scope>
    <source>
        <strain>MGAS10750</strain>
    </source>
</reference>